<accession>P64624</accession>
<accession>P45533</accession>
<accession>Q2M711</accession>
<dbReference type="EMBL" id="U18997">
    <property type="protein sequence ID" value="AAA58143.1"/>
    <property type="status" value="ALT_INIT"/>
    <property type="molecule type" value="Genomic_DNA"/>
</dbReference>
<dbReference type="EMBL" id="U00096">
    <property type="protein sequence ID" value="AAC76371.2"/>
    <property type="molecule type" value="Genomic_DNA"/>
</dbReference>
<dbReference type="EMBL" id="AP009048">
    <property type="protein sequence ID" value="BAE77945.1"/>
    <property type="molecule type" value="Genomic_DNA"/>
</dbReference>
<dbReference type="RefSeq" id="NP_417805.4">
    <property type="nucleotide sequence ID" value="NC_000913.3"/>
</dbReference>
<dbReference type="RefSeq" id="WP_000091466.1">
    <property type="nucleotide sequence ID" value="NZ_STEB01000004.1"/>
</dbReference>
<dbReference type="BioGRID" id="4262470">
    <property type="interactions" value="22"/>
</dbReference>
<dbReference type="DIP" id="DIP-12311N"/>
<dbReference type="FunCoup" id="P64624">
    <property type="interactions" value="11"/>
</dbReference>
<dbReference type="STRING" id="511145.b3346"/>
<dbReference type="jPOST" id="P64624"/>
<dbReference type="PaxDb" id="511145-b3346"/>
<dbReference type="EnsemblBacteria" id="AAC76371">
    <property type="protein sequence ID" value="AAC76371"/>
    <property type="gene ID" value="b3346"/>
</dbReference>
<dbReference type="GeneID" id="947851"/>
<dbReference type="KEGG" id="ecj:JW5703"/>
<dbReference type="KEGG" id="eco:b3346"/>
<dbReference type="KEGG" id="ecoc:C3026_18170"/>
<dbReference type="PATRIC" id="fig|511145.12.peg.3439"/>
<dbReference type="EchoBASE" id="EB2736"/>
<dbReference type="eggNOG" id="COG2964">
    <property type="taxonomic scope" value="Bacteria"/>
</dbReference>
<dbReference type="HOGENOM" id="CLU_080179_3_0_6"/>
<dbReference type="InParanoid" id="P64624"/>
<dbReference type="OMA" id="IGAFCIN"/>
<dbReference type="OrthoDB" id="9796595at2"/>
<dbReference type="PhylomeDB" id="P64624"/>
<dbReference type="BioCyc" id="EcoCyc:G7715-MONOMER"/>
<dbReference type="PRO" id="PR:P64624"/>
<dbReference type="Proteomes" id="UP000000625">
    <property type="component" value="Chromosome"/>
</dbReference>
<dbReference type="GO" id="GO:0005829">
    <property type="term" value="C:cytosol"/>
    <property type="evidence" value="ECO:0000314"/>
    <property type="project" value="EcoCyc"/>
</dbReference>
<dbReference type="InterPro" id="IPR039446">
    <property type="entry name" value="DauR-like"/>
</dbReference>
<dbReference type="InterPro" id="IPR039445">
    <property type="entry name" value="DauR-like_HTH"/>
</dbReference>
<dbReference type="InterPro" id="IPR013559">
    <property type="entry name" value="YheO"/>
</dbReference>
<dbReference type="PANTHER" id="PTHR35568">
    <property type="entry name" value="TRANSCRIPTIONAL REGULATOR DAUR"/>
    <property type="match status" value="1"/>
</dbReference>
<dbReference type="PANTHER" id="PTHR35568:SF1">
    <property type="entry name" value="TRANSCRIPTIONAL REGULATOR DAUR"/>
    <property type="match status" value="1"/>
</dbReference>
<dbReference type="Pfam" id="PF13309">
    <property type="entry name" value="HTH_22"/>
    <property type="match status" value="1"/>
</dbReference>
<dbReference type="Pfam" id="PF08348">
    <property type="entry name" value="PAS_6"/>
    <property type="match status" value="1"/>
</dbReference>
<gene>
    <name type="primary">yheO</name>
    <name type="ordered locus">b3346</name>
    <name type="ordered locus">JW5703</name>
</gene>
<evidence type="ECO:0000305" key="1"/>
<sequence length="240" mass="26821">MSRSLLTNETSELDLLDQRPFDQTDFDILKSYEAVVDGLAMLIGSHCEIVLHSLQDLKCSAIRIANGEHTGRKIGSPITDLALRMLHDMTGADSSVSKCYFTRAKSGVLMKSLTIAIRNREQRVIGLLCINMNLDVPFSQIMSTFVPPETPDVGSSVNFASSVEDLVTQTLEFTIEEVNADRNVSNNAKNRQIVLNLYEKGIFDIKDAINQVADRLNISKHTVYLYIRQFKSGDFQGQDK</sequence>
<comment type="similarity">
    <text evidence="1">To H.influenzae HI_0575.</text>
</comment>
<comment type="sequence caution" evidence="1">
    <conflict type="erroneous initiation">
        <sequence resource="EMBL-CDS" id="AAA58143"/>
    </conflict>
    <text>Extended N-terminus.</text>
</comment>
<name>YHEO_ECOLI</name>
<organism>
    <name type="scientific">Escherichia coli (strain K12)</name>
    <dbReference type="NCBI Taxonomy" id="83333"/>
    <lineage>
        <taxon>Bacteria</taxon>
        <taxon>Pseudomonadati</taxon>
        <taxon>Pseudomonadota</taxon>
        <taxon>Gammaproteobacteria</taxon>
        <taxon>Enterobacterales</taxon>
        <taxon>Enterobacteriaceae</taxon>
        <taxon>Escherichia</taxon>
    </lineage>
</organism>
<feature type="chain" id="PRO_0000169509" description="Uncharacterized protein YheO">
    <location>
        <begin position="1"/>
        <end position="240"/>
    </location>
</feature>
<reference key="1">
    <citation type="journal article" date="1997" name="Science">
        <title>The complete genome sequence of Escherichia coli K-12.</title>
        <authorList>
            <person name="Blattner F.R."/>
            <person name="Plunkett G. III"/>
            <person name="Bloch C.A."/>
            <person name="Perna N.T."/>
            <person name="Burland V."/>
            <person name="Riley M."/>
            <person name="Collado-Vides J."/>
            <person name="Glasner J.D."/>
            <person name="Rode C.K."/>
            <person name="Mayhew G.F."/>
            <person name="Gregor J."/>
            <person name="Davis N.W."/>
            <person name="Kirkpatrick H.A."/>
            <person name="Goeden M.A."/>
            <person name="Rose D.J."/>
            <person name="Mau B."/>
            <person name="Shao Y."/>
        </authorList>
    </citation>
    <scope>NUCLEOTIDE SEQUENCE [LARGE SCALE GENOMIC DNA]</scope>
    <source>
        <strain>K12 / MG1655 / ATCC 47076</strain>
    </source>
</reference>
<reference key="2">
    <citation type="journal article" date="2006" name="Mol. Syst. Biol.">
        <title>Highly accurate genome sequences of Escherichia coli K-12 strains MG1655 and W3110.</title>
        <authorList>
            <person name="Hayashi K."/>
            <person name="Morooka N."/>
            <person name="Yamamoto Y."/>
            <person name="Fujita K."/>
            <person name="Isono K."/>
            <person name="Choi S."/>
            <person name="Ohtsubo E."/>
            <person name="Baba T."/>
            <person name="Wanner B.L."/>
            <person name="Mori H."/>
            <person name="Horiuchi T."/>
        </authorList>
    </citation>
    <scope>NUCLEOTIDE SEQUENCE [LARGE SCALE GENOMIC DNA]</scope>
    <source>
        <strain>K12 / W3110 / ATCC 27325 / DSM 5911</strain>
    </source>
</reference>
<proteinExistence type="predicted"/>
<keyword id="KW-1185">Reference proteome</keyword>
<protein>
    <recommendedName>
        <fullName>Uncharacterized protein YheO</fullName>
    </recommendedName>
</protein>